<reference key="1">
    <citation type="journal article" date="2002" name="J. Bacteriol.">
        <title>Whole-genome comparison of Mycobacterium tuberculosis clinical and laboratory strains.</title>
        <authorList>
            <person name="Fleischmann R.D."/>
            <person name="Alland D."/>
            <person name="Eisen J.A."/>
            <person name="Carpenter L."/>
            <person name="White O."/>
            <person name="Peterson J.D."/>
            <person name="DeBoy R.T."/>
            <person name="Dodson R.J."/>
            <person name="Gwinn M.L."/>
            <person name="Haft D.H."/>
            <person name="Hickey E.K."/>
            <person name="Kolonay J.F."/>
            <person name="Nelson W.C."/>
            <person name="Umayam L.A."/>
            <person name="Ermolaeva M.D."/>
            <person name="Salzberg S.L."/>
            <person name="Delcher A."/>
            <person name="Utterback T.R."/>
            <person name="Weidman J.F."/>
            <person name="Khouri H.M."/>
            <person name="Gill J."/>
            <person name="Mikula A."/>
            <person name="Bishai W."/>
            <person name="Jacobs W.R. Jr."/>
            <person name="Venter J.C."/>
            <person name="Fraser C.M."/>
        </authorList>
    </citation>
    <scope>NUCLEOTIDE SEQUENCE [LARGE SCALE GENOMIC DNA]</scope>
    <source>
        <strain>CDC 1551 / Oshkosh</strain>
    </source>
</reference>
<gene>
    <name type="primary">mku</name>
    <name type="ordered locus">MT0964</name>
</gene>
<sequence>MRAIWTGSIAFGLVNVPVKVYSATADHDIRFHQVHAKDNGRIRYKRVCEACGEVVDYRDLARAYESGDGQMVAITDDDIASLPEERSREIEVLEFVPAADVDPMMFDRSYFLEPDSKSSKSYVLLAKTLAETDRMAIVHFTLRNKTRLAALRVKDFGKREVMMVHTLLWPDEIRDPDFPVLDQKVEIKPAELKMAGQVVDSMADDFNPDRYHDTYQEQLQELIDTKLEGGQAFTAEDQPRLLDEPEDVSDLLAKLEASVKARSKANSNVPTPP</sequence>
<accession>P9WKD8</accession>
<accession>L7N5V9</accession>
<organism>
    <name type="scientific">Mycobacterium tuberculosis (strain CDC 1551 / Oshkosh)</name>
    <dbReference type="NCBI Taxonomy" id="83331"/>
    <lineage>
        <taxon>Bacteria</taxon>
        <taxon>Bacillati</taxon>
        <taxon>Actinomycetota</taxon>
        <taxon>Actinomycetes</taxon>
        <taxon>Mycobacteriales</taxon>
        <taxon>Mycobacteriaceae</taxon>
        <taxon>Mycobacterium</taxon>
        <taxon>Mycobacterium tuberculosis complex</taxon>
    </lineage>
</organism>
<proteinExistence type="inferred from homology"/>
<protein>
    <recommendedName>
        <fullName evidence="2">Non-homologous end joining protein Ku</fullName>
    </recommendedName>
    <alternativeName>
        <fullName>Mt-Ku</fullName>
    </alternativeName>
</protein>
<name>KU_MYCTO</name>
<dbReference type="EMBL" id="AE000516">
    <property type="protein sequence ID" value="AAK45211.1"/>
    <property type="molecule type" value="Genomic_DNA"/>
</dbReference>
<dbReference type="PIR" id="A70585">
    <property type="entry name" value="A70585"/>
</dbReference>
<dbReference type="RefSeq" id="WP_003404795.1">
    <property type="nucleotide sequence ID" value="NZ_KK341227.1"/>
</dbReference>
<dbReference type="SMR" id="P9WKD8"/>
<dbReference type="KEGG" id="mtc:MT0964"/>
<dbReference type="PATRIC" id="fig|83331.31.peg.1034"/>
<dbReference type="HOGENOM" id="CLU_048975_1_1_11"/>
<dbReference type="Proteomes" id="UP000001020">
    <property type="component" value="Chromosome"/>
</dbReference>
<dbReference type="GO" id="GO:0003690">
    <property type="term" value="F:double-stranded DNA binding"/>
    <property type="evidence" value="ECO:0007669"/>
    <property type="project" value="UniProtKB-UniRule"/>
</dbReference>
<dbReference type="GO" id="GO:0006310">
    <property type="term" value="P:DNA recombination"/>
    <property type="evidence" value="ECO:0007669"/>
    <property type="project" value="UniProtKB-KW"/>
</dbReference>
<dbReference type="GO" id="GO:0006303">
    <property type="term" value="P:double-strand break repair via nonhomologous end joining"/>
    <property type="evidence" value="ECO:0007669"/>
    <property type="project" value="UniProtKB-UniRule"/>
</dbReference>
<dbReference type="CDD" id="cd00789">
    <property type="entry name" value="KU_like"/>
    <property type="match status" value="1"/>
</dbReference>
<dbReference type="FunFam" id="2.40.290.10:FF:000004">
    <property type="entry name" value="Non-homologous end joining protein Ku"/>
    <property type="match status" value="1"/>
</dbReference>
<dbReference type="Gene3D" id="2.40.290.10">
    <property type="match status" value="1"/>
</dbReference>
<dbReference type="HAMAP" id="MF_01875">
    <property type="entry name" value="Prokaryotic_Ku"/>
    <property type="match status" value="1"/>
</dbReference>
<dbReference type="InterPro" id="IPR006164">
    <property type="entry name" value="Ku70/Ku80_beta-barrel_dom"/>
</dbReference>
<dbReference type="InterPro" id="IPR009187">
    <property type="entry name" value="Prok_Ku"/>
</dbReference>
<dbReference type="InterPro" id="IPR016194">
    <property type="entry name" value="SPOC-like_C_dom_sf"/>
</dbReference>
<dbReference type="NCBIfam" id="TIGR02772">
    <property type="entry name" value="Ku_bact"/>
    <property type="match status" value="1"/>
</dbReference>
<dbReference type="PANTHER" id="PTHR41251">
    <property type="entry name" value="NON-HOMOLOGOUS END JOINING PROTEIN KU"/>
    <property type="match status" value="1"/>
</dbReference>
<dbReference type="PANTHER" id="PTHR41251:SF1">
    <property type="entry name" value="NON-HOMOLOGOUS END JOINING PROTEIN KU"/>
    <property type="match status" value="1"/>
</dbReference>
<dbReference type="Pfam" id="PF02735">
    <property type="entry name" value="Ku"/>
    <property type="match status" value="1"/>
</dbReference>
<dbReference type="PIRSF" id="PIRSF006493">
    <property type="entry name" value="Prok_Ku"/>
    <property type="match status" value="1"/>
</dbReference>
<dbReference type="SMART" id="SM00559">
    <property type="entry name" value="Ku78"/>
    <property type="match status" value="1"/>
</dbReference>
<dbReference type="SUPFAM" id="SSF100939">
    <property type="entry name" value="SPOC domain-like"/>
    <property type="match status" value="1"/>
</dbReference>
<evidence type="ECO:0000250" key="1"/>
<evidence type="ECO:0000255" key="2">
    <source>
        <dbReference type="HAMAP-Rule" id="MF_01875"/>
    </source>
</evidence>
<comment type="function">
    <text evidence="2">With LigD forms a non-homologous end joining (NHEJ) DNA repair enzyme, which repairs dsDNA breaks with reduced fidelity. Binds linear dsDNA with 5'- and 3'- overhangs but not closed circular dsDNA nor ssDNA. Recruits and stimulates the ligase activity of LigD.</text>
</comment>
<comment type="subunit">
    <text evidence="2">Homodimer. Interacts with LigD.</text>
</comment>
<comment type="similarity">
    <text evidence="2">Belongs to the prokaryotic Ku family.</text>
</comment>
<keyword id="KW-0227">DNA damage</keyword>
<keyword id="KW-0233">DNA recombination</keyword>
<keyword id="KW-0234">DNA repair</keyword>
<keyword id="KW-0238">DNA-binding</keyword>
<keyword id="KW-1185">Reference proteome</keyword>
<feature type="chain" id="PRO_0000427671" description="Non-homologous end joining protein Ku">
    <location>
        <begin position="1"/>
        <end position="273"/>
    </location>
</feature>
<feature type="domain" description="Ku" evidence="2">
    <location>
        <begin position="10"/>
        <end position="193"/>
    </location>
</feature>
<feature type="region of interest" description="Sufficient for interaction with LigD" evidence="1">
    <location>
        <begin position="111"/>
        <end position="273"/>
    </location>
</feature>